<name>ACP_SINFN</name>
<organism>
    <name type="scientific">Sinorhizobium fredii (strain NBRC 101917 / NGR234)</name>
    <dbReference type="NCBI Taxonomy" id="394"/>
    <lineage>
        <taxon>Bacteria</taxon>
        <taxon>Pseudomonadati</taxon>
        <taxon>Pseudomonadota</taxon>
        <taxon>Alphaproteobacteria</taxon>
        <taxon>Hyphomicrobiales</taxon>
        <taxon>Rhizobiaceae</taxon>
        <taxon>Sinorhizobium/Ensifer group</taxon>
        <taxon>Sinorhizobium</taxon>
    </lineage>
</organism>
<gene>
    <name evidence="1" type="primary">acpP</name>
    <name type="ordered locus">NGR_c08920</name>
</gene>
<proteinExistence type="inferred from homology"/>
<dbReference type="EMBL" id="CP001389">
    <property type="protein sequence ID" value="ACP24682.1"/>
    <property type="molecule type" value="Genomic_DNA"/>
</dbReference>
<dbReference type="RefSeq" id="WP_003531676.1">
    <property type="nucleotide sequence ID" value="NC_012587.1"/>
</dbReference>
<dbReference type="RefSeq" id="YP_002825435.1">
    <property type="nucleotide sequence ID" value="NC_012587.1"/>
</dbReference>
<dbReference type="SMR" id="C3M9B6"/>
<dbReference type="STRING" id="394.NGR_c08920"/>
<dbReference type="KEGG" id="rhi:NGR_c08920"/>
<dbReference type="PATRIC" id="fig|394.7.peg.3708"/>
<dbReference type="eggNOG" id="COG0236">
    <property type="taxonomic scope" value="Bacteria"/>
</dbReference>
<dbReference type="HOGENOM" id="CLU_108696_5_1_5"/>
<dbReference type="OrthoDB" id="9804551at2"/>
<dbReference type="UniPathway" id="UPA00094"/>
<dbReference type="PRO" id="PR:C3M9B6"/>
<dbReference type="Proteomes" id="UP000001054">
    <property type="component" value="Chromosome"/>
</dbReference>
<dbReference type="GO" id="GO:0005829">
    <property type="term" value="C:cytosol"/>
    <property type="evidence" value="ECO:0007669"/>
    <property type="project" value="TreeGrafter"/>
</dbReference>
<dbReference type="GO" id="GO:0016020">
    <property type="term" value="C:membrane"/>
    <property type="evidence" value="ECO:0007669"/>
    <property type="project" value="GOC"/>
</dbReference>
<dbReference type="GO" id="GO:0000035">
    <property type="term" value="F:acyl binding"/>
    <property type="evidence" value="ECO:0007669"/>
    <property type="project" value="TreeGrafter"/>
</dbReference>
<dbReference type="GO" id="GO:0000036">
    <property type="term" value="F:acyl carrier activity"/>
    <property type="evidence" value="ECO:0007669"/>
    <property type="project" value="UniProtKB-UniRule"/>
</dbReference>
<dbReference type="GO" id="GO:0009245">
    <property type="term" value="P:lipid A biosynthetic process"/>
    <property type="evidence" value="ECO:0007669"/>
    <property type="project" value="TreeGrafter"/>
</dbReference>
<dbReference type="FunFam" id="1.10.1200.10:FF:000001">
    <property type="entry name" value="Acyl carrier protein"/>
    <property type="match status" value="1"/>
</dbReference>
<dbReference type="Gene3D" id="1.10.1200.10">
    <property type="entry name" value="ACP-like"/>
    <property type="match status" value="1"/>
</dbReference>
<dbReference type="HAMAP" id="MF_01217">
    <property type="entry name" value="Acyl_carrier"/>
    <property type="match status" value="1"/>
</dbReference>
<dbReference type="InterPro" id="IPR003231">
    <property type="entry name" value="ACP"/>
</dbReference>
<dbReference type="InterPro" id="IPR036736">
    <property type="entry name" value="ACP-like_sf"/>
</dbReference>
<dbReference type="InterPro" id="IPR009081">
    <property type="entry name" value="PP-bd_ACP"/>
</dbReference>
<dbReference type="InterPro" id="IPR006162">
    <property type="entry name" value="Ppantetheine_attach_site"/>
</dbReference>
<dbReference type="NCBIfam" id="TIGR00517">
    <property type="entry name" value="acyl_carrier"/>
    <property type="match status" value="1"/>
</dbReference>
<dbReference type="NCBIfam" id="NF002148">
    <property type="entry name" value="PRK00982.1-2"/>
    <property type="match status" value="1"/>
</dbReference>
<dbReference type="NCBIfam" id="NF002149">
    <property type="entry name" value="PRK00982.1-3"/>
    <property type="match status" value="1"/>
</dbReference>
<dbReference type="NCBIfam" id="NF002150">
    <property type="entry name" value="PRK00982.1-4"/>
    <property type="match status" value="1"/>
</dbReference>
<dbReference type="NCBIfam" id="NF002151">
    <property type="entry name" value="PRK00982.1-5"/>
    <property type="match status" value="1"/>
</dbReference>
<dbReference type="PANTHER" id="PTHR20863">
    <property type="entry name" value="ACYL CARRIER PROTEIN"/>
    <property type="match status" value="1"/>
</dbReference>
<dbReference type="PANTHER" id="PTHR20863:SF76">
    <property type="entry name" value="CARRIER DOMAIN-CONTAINING PROTEIN"/>
    <property type="match status" value="1"/>
</dbReference>
<dbReference type="Pfam" id="PF00550">
    <property type="entry name" value="PP-binding"/>
    <property type="match status" value="1"/>
</dbReference>
<dbReference type="SUPFAM" id="SSF47336">
    <property type="entry name" value="ACP-like"/>
    <property type="match status" value="1"/>
</dbReference>
<dbReference type="PROSITE" id="PS50075">
    <property type="entry name" value="CARRIER"/>
    <property type="match status" value="1"/>
</dbReference>
<dbReference type="PROSITE" id="PS00012">
    <property type="entry name" value="PHOSPHOPANTETHEINE"/>
    <property type="match status" value="1"/>
</dbReference>
<keyword id="KW-0963">Cytoplasm</keyword>
<keyword id="KW-0275">Fatty acid biosynthesis</keyword>
<keyword id="KW-0276">Fatty acid metabolism</keyword>
<keyword id="KW-0444">Lipid biosynthesis</keyword>
<keyword id="KW-0443">Lipid metabolism</keyword>
<keyword id="KW-0596">Phosphopantetheine</keyword>
<keyword id="KW-0597">Phosphoprotein</keyword>
<keyword id="KW-1185">Reference proteome</keyword>
<feature type="chain" id="PRO_1000164799" description="Acyl carrier protein">
    <location>
        <begin position="1"/>
        <end position="78"/>
    </location>
</feature>
<feature type="domain" description="Carrier" evidence="2">
    <location>
        <begin position="2"/>
        <end position="77"/>
    </location>
</feature>
<feature type="modified residue" description="O-(pantetheine 4'-phosphoryl)serine" evidence="2">
    <location>
        <position position="37"/>
    </location>
</feature>
<sequence>MSDIAERVKKIVIDHLGVDAEKVSEGASFIDDLGADSLDTVELVMAFEEEFGVEIPDDAADSILTVGDAVKFIEKAQA</sequence>
<accession>C3M9B6</accession>
<evidence type="ECO:0000255" key="1">
    <source>
        <dbReference type="HAMAP-Rule" id="MF_01217"/>
    </source>
</evidence>
<evidence type="ECO:0000255" key="2">
    <source>
        <dbReference type="PROSITE-ProRule" id="PRU00258"/>
    </source>
</evidence>
<comment type="function">
    <text evidence="1">Carrier of the growing fatty acid chain in fatty acid biosynthesis.</text>
</comment>
<comment type="pathway">
    <text evidence="1">Lipid metabolism; fatty acid biosynthesis.</text>
</comment>
<comment type="subcellular location">
    <subcellularLocation>
        <location evidence="1">Cytoplasm</location>
    </subcellularLocation>
</comment>
<comment type="PTM">
    <text evidence="1">4'-phosphopantetheine is transferred from CoA to a specific serine of apo-ACP by AcpS. This modification is essential for activity because fatty acids are bound in thioester linkage to the sulfhydryl of the prosthetic group.</text>
</comment>
<comment type="similarity">
    <text evidence="1">Belongs to the acyl carrier protein (ACP) family.</text>
</comment>
<protein>
    <recommendedName>
        <fullName evidence="1">Acyl carrier protein</fullName>
        <shortName evidence="1">ACP</shortName>
    </recommendedName>
</protein>
<reference key="1">
    <citation type="journal article" date="2009" name="Appl. Environ. Microbiol.">
        <title>Rhizobium sp. strain NGR234 possesses a remarkable number of secretion systems.</title>
        <authorList>
            <person name="Schmeisser C."/>
            <person name="Liesegang H."/>
            <person name="Krysciak D."/>
            <person name="Bakkou N."/>
            <person name="Le Quere A."/>
            <person name="Wollherr A."/>
            <person name="Heinemeyer I."/>
            <person name="Morgenstern B."/>
            <person name="Pommerening-Roeser A."/>
            <person name="Flores M."/>
            <person name="Palacios R."/>
            <person name="Brenner S."/>
            <person name="Gottschalk G."/>
            <person name="Schmitz R.A."/>
            <person name="Broughton W.J."/>
            <person name="Perret X."/>
            <person name="Strittmatter A.W."/>
            <person name="Streit W.R."/>
        </authorList>
    </citation>
    <scope>NUCLEOTIDE SEQUENCE [LARGE SCALE GENOMIC DNA]</scope>
    <source>
        <strain>NBRC 101917 / NGR234</strain>
    </source>
</reference>